<gene>
    <name evidence="4" type="primary">scoC</name>
</gene>
<keyword id="KW-0067">ATP-binding</keyword>
<keyword id="KW-0276">Fatty acid metabolism</keyword>
<keyword id="KW-0436">Ligase</keyword>
<keyword id="KW-0443">Lipid metabolism</keyword>
<keyword id="KW-0460">Magnesium</keyword>
<keyword id="KW-0479">Metal-binding</keyword>
<keyword id="KW-0547">Nucleotide-binding</keyword>
<reference key="1">
    <citation type="journal article" date="2017" name="Proc. Natl. Acad. Sci. U.S.A.">
        <title>Biosynthesis of isonitrile lipopeptides by conserved nonribosomal peptide synthetase gene clusters in Actinobacteria.</title>
        <authorList>
            <person name="Harris N.C."/>
            <person name="Sato M."/>
            <person name="Herman N.A."/>
            <person name="Twigg F."/>
            <person name="Cai W."/>
            <person name="Liu J."/>
            <person name="Zhu X."/>
            <person name="Downey J."/>
            <person name="Khalaf R."/>
            <person name="Martin J."/>
            <person name="Koshino H."/>
            <person name="Zhang W."/>
        </authorList>
    </citation>
    <scope>NUCLEOTIDE SEQUENCE [GENOMIC DNA]</scope>
    <scope>FUNCTION</scope>
    <scope>CATALYTIC ACTIVITY</scope>
    <scope>SUBSTRATE SPECIFICITY</scope>
    <source>
        <strain>NRRL 18370</strain>
    </source>
</reference>
<reference key="2">
    <citation type="journal article" date="2018" name="Angew. Chem. Int. Ed. Engl.">
        <title>Isonitrile Formation by a Non-Heme Iron(II)-Dependent Oxidase/Decarboxylase.</title>
        <authorList>
            <person name="Harris N.C."/>
            <person name="Born D.A."/>
            <person name="Cai W."/>
            <person name="Huang Y."/>
            <person name="Martin J."/>
            <person name="Khalaf R."/>
            <person name="Drennan C.L."/>
            <person name="Zhang W."/>
        </authorList>
    </citation>
    <scope>FUNCTION</scope>
    <scope>CATALYTIC ACTIVITY</scope>
    <source>
        <strain>NRRL 18370</strain>
    </source>
</reference>
<evidence type="ECO:0000250" key="1">
    <source>
        <dbReference type="UniProtKB" id="Q5SKN9"/>
    </source>
</evidence>
<evidence type="ECO:0000269" key="2">
    <source>
    </source>
</evidence>
<evidence type="ECO:0000269" key="3">
    <source>
    </source>
</evidence>
<evidence type="ECO:0000303" key="4">
    <source>
    </source>
</evidence>
<evidence type="ECO:0000305" key="5"/>
<evidence type="ECO:0000305" key="6">
    <source>
    </source>
</evidence>
<evidence type="ECO:0000305" key="7">
    <source>
    </source>
</evidence>
<comment type="function">
    <text evidence="2 3">Acyl:acyl-carrier protein ligase involved in the biosynthesis of a unique class of isonitrile lipopeptides (INLPs). Shows a strong preference for fatty acids with a short/medium-chain length (C4-C8) in vitro, and accepts alpha,beta-unsaturated fatty acids such as crotonate, which seems to be a physiological substrate. Acts twice during the INLP pathway, catalyzing the activation of crotonate ((2E)-2-butenoate) as well as (3R)-3-isocyanylbutanoate as acyl-adenylates (acyl-AMP), and then the acyl transfer to the dedicated acyl-carrier protein ScoB.</text>
</comment>
<comment type="catalytic activity">
    <reaction evidence="2">
        <text>a medium-chain fatty acid + holo-[ACP] + ATP = a medium-chain fatty acyl-[ACP] + AMP + diphosphate</text>
        <dbReference type="Rhea" id="RHEA:50460"/>
        <dbReference type="Rhea" id="RHEA-COMP:9685"/>
        <dbReference type="Rhea" id="RHEA-COMP:12681"/>
        <dbReference type="ChEBI" id="CHEBI:30616"/>
        <dbReference type="ChEBI" id="CHEBI:33019"/>
        <dbReference type="ChEBI" id="CHEBI:59558"/>
        <dbReference type="ChEBI" id="CHEBI:64479"/>
        <dbReference type="ChEBI" id="CHEBI:133242"/>
        <dbReference type="ChEBI" id="CHEBI:456215"/>
        <dbReference type="EC" id="6.2.1.47"/>
    </reaction>
    <physiologicalReaction direction="left-to-right" evidence="6">
        <dbReference type="Rhea" id="RHEA:50461"/>
    </physiologicalReaction>
</comment>
<comment type="catalytic activity">
    <reaction evidence="6">
        <text>a medium-chain fatty acid + ATP + H(+) = a medium-chain fatty acyl-AMP + diphosphate</text>
        <dbReference type="Rhea" id="RHEA:56920"/>
        <dbReference type="ChEBI" id="CHEBI:15378"/>
        <dbReference type="ChEBI" id="CHEBI:30616"/>
        <dbReference type="ChEBI" id="CHEBI:33019"/>
        <dbReference type="ChEBI" id="CHEBI:59558"/>
        <dbReference type="ChEBI" id="CHEBI:141140"/>
    </reaction>
    <physiologicalReaction direction="left-to-right" evidence="6">
        <dbReference type="Rhea" id="RHEA:56921"/>
    </physiologicalReaction>
</comment>
<comment type="catalytic activity">
    <reaction evidence="6">
        <text>a medium-chain fatty acyl-AMP + holo-[ACP] = a medium-chain fatty acyl-[ACP] + AMP + H(+)</text>
        <dbReference type="Rhea" id="RHEA:63636"/>
        <dbReference type="Rhea" id="RHEA-COMP:9685"/>
        <dbReference type="Rhea" id="RHEA-COMP:12681"/>
        <dbReference type="ChEBI" id="CHEBI:15378"/>
        <dbReference type="ChEBI" id="CHEBI:64479"/>
        <dbReference type="ChEBI" id="CHEBI:133242"/>
        <dbReference type="ChEBI" id="CHEBI:141140"/>
        <dbReference type="ChEBI" id="CHEBI:456215"/>
    </reaction>
    <physiologicalReaction direction="left-to-right" evidence="6">
        <dbReference type="Rhea" id="RHEA:63637"/>
    </physiologicalReaction>
</comment>
<comment type="catalytic activity">
    <reaction evidence="2">
        <text>octanoate + holo-[ACP] + ATP = octanoyl-[ACP] + AMP + diphosphate</text>
        <dbReference type="Rhea" id="RHEA:28022"/>
        <dbReference type="Rhea" id="RHEA-COMP:9636"/>
        <dbReference type="Rhea" id="RHEA-COMP:9685"/>
        <dbReference type="ChEBI" id="CHEBI:25646"/>
        <dbReference type="ChEBI" id="CHEBI:30616"/>
        <dbReference type="ChEBI" id="CHEBI:33019"/>
        <dbReference type="ChEBI" id="CHEBI:64479"/>
        <dbReference type="ChEBI" id="CHEBI:78463"/>
        <dbReference type="ChEBI" id="CHEBI:456215"/>
    </reaction>
    <physiologicalReaction direction="left-to-right" evidence="6">
        <dbReference type="Rhea" id="RHEA:28023"/>
    </physiologicalReaction>
</comment>
<comment type="catalytic activity">
    <reaction evidence="6">
        <text>octanoate + ATP + H(+) = octanoyl-AMP + diphosphate</text>
        <dbReference type="Rhea" id="RHEA:64996"/>
        <dbReference type="ChEBI" id="CHEBI:15378"/>
        <dbReference type="ChEBI" id="CHEBI:25646"/>
        <dbReference type="ChEBI" id="CHEBI:30616"/>
        <dbReference type="ChEBI" id="CHEBI:33019"/>
        <dbReference type="ChEBI" id="CHEBI:156260"/>
    </reaction>
    <physiologicalReaction direction="left-to-right" evidence="6">
        <dbReference type="Rhea" id="RHEA:64997"/>
    </physiologicalReaction>
</comment>
<comment type="catalytic activity">
    <reaction evidence="6">
        <text>octanoyl-AMP + holo-[ACP] = octanoyl-[ACP] + AMP + H(+)</text>
        <dbReference type="Rhea" id="RHEA:65000"/>
        <dbReference type="Rhea" id="RHEA-COMP:9636"/>
        <dbReference type="Rhea" id="RHEA-COMP:9685"/>
        <dbReference type="ChEBI" id="CHEBI:15378"/>
        <dbReference type="ChEBI" id="CHEBI:64479"/>
        <dbReference type="ChEBI" id="CHEBI:78463"/>
        <dbReference type="ChEBI" id="CHEBI:156260"/>
        <dbReference type="ChEBI" id="CHEBI:456215"/>
    </reaction>
    <physiologicalReaction direction="left-to-right" evidence="6">
        <dbReference type="Rhea" id="RHEA:65001"/>
    </physiologicalReaction>
</comment>
<comment type="catalytic activity">
    <reaction evidence="2">
        <text>a (2E)-enoyl fatty acid + holo-[ACP] + ATP = a (2E)-enoyl-[ACP] + AMP + diphosphate</text>
        <dbReference type="Rhea" id="RHEA:74911"/>
        <dbReference type="Rhea" id="RHEA-COMP:9685"/>
        <dbReference type="Rhea" id="RHEA-COMP:9925"/>
        <dbReference type="ChEBI" id="CHEBI:30616"/>
        <dbReference type="ChEBI" id="CHEBI:33019"/>
        <dbReference type="ChEBI" id="CHEBI:64479"/>
        <dbReference type="ChEBI" id="CHEBI:78784"/>
        <dbReference type="ChEBI" id="CHEBI:194103"/>
        <dbReference type="ChEBI" id="CHEBI:456215"/>
    </reaction>
    <physiologicalReaction direction="left-to-right" evidence="6">
        <dbReference type="Rhea" id="RHEA:74912"/>
    </physiologicalReaction>
</comment>
<comment type="catalytic activity">
    <reaction evidence="6">
        <text>a (2E)-enoyl fatty acid + ATP + H(+) = a (2E)-2-fatty-enoyl-AMP + diphosphate</text>
        <dbReference type="Rhea" id="RHEA:74915"/>
        <dbReference type="ChEBI" id="CHEBI:15378"/>
        <dbReference type="ChEBI" id="CHEBI:30616"/>
        <dbReference type="ChEBI" id="CHEBI:33019"/>
        <dbReference type="ChEBI" id="CHEBI:194103"/>
        <dbReference type="ChEBI" id="CHEBI:194106"/>
    </reaction>
    <physiologicalReaction direction="left-to-right" evidence="6">
        <dbReference type="Rhea" id="RHEA:74916"/>
    </physiologicalReaction>
</comment>
<comment type="catalytic activity">
    <reaction evidence="6">
        <text>a (2E)-2-fatty-enoyl-AMP + holo-[ACP] = a (2E)-enoyl-[ACP] + AMP + H(+)</text>
        <dbReference type="Rhea" id="RHEA:74919"/>
        <dbReference type="Rhea" id="RHEA-COMP:9685"/>
        <dbReference type="Rhea" id="RHEA-COMP:9925"/>
        <dbReference type="ChEBI" id="CHEBI:15378"/>
        <dbReference type="ChEBI" id="CHEBI:64479"/>
        <dbReference type="ChEBI" id="CHEBI:78784"/>
        <dbReference type="ChEBI" id="CHEBI:194106"/>
        <dbReference type="ChEBI" id="CHEBI:456215"/>
    </reaction>
    <physiologicalReaction direction="left-to-right" evidence="6">
        <dbReference type="Rhea" id="RHEA:74920"/>
    </physiologicalReaction>
</comment>
<comment type="catalytic activity">
    <reaction evidence="2">
        <text>(2E)-2-butenoate + holo-[ACP] + ATP = (2E)-butenoyl-[ACP] + AMP + diphosphate</text>
        <dbReference type="Rhea" id="RHEA:74899"/>
        <dbReference type="Rhea" id="RHEA-COMP:9627"/>
        <dbReference type="Rhea" id="RHEA-COMP:9685"/>
        <dbReference type="ChEBI" id="CHEBI:30616"/>
        <dbReference type="ChEBI" id="CHEBI:33019"/>
        <dbReference type="ChEBI" id="CHEBI:35899"/>
        <dbReference type="ChEBI" id="CHEBI:64479"/>
        <dbReference type="ChEBI" id="CHEBI:78453"/>
        <dbReference type="ChEBI" id="CHEBI:456215"/>
    </reaction>
</comment>
<comment type="catalytic activity">
    <reaction evidence="6">
        <text>(2E)-2-butenoate + ATP + H(+) = (2E)-but-2-enoyl-AMP + diphosphate</text>
        <dbReference type="Rhea" id="RHEA:74903"/>
        <dbReference type="ChEBI" id="CHEBI:15378"/>
        <dbReference type="ChEBI" id="CHEBI:30616"/>
        <dbReference type="ChEBI" id="CHEBI:33019"/>
        <dbReference type="ChEBI" id="CHEBI:35899"/>
        <dbReference type="ChEBI" id="CHEBI:194098"/>
    </reaction>
    <physiologicalReaction direction="left-to-right" evidence="6">
        <dbReference type="Rhea" id="RHEA:74904"/>
    </physiologicalReaction>
</comment>
<comment type="catalytic activity">
    <reaction evidence="6">
        <text>(2E)-but-2-enoyl-AMP + holo-[ACP] = (2E)-butenoyl-[ACP] + AMP + H(+)</text>
        <dbReference type="Rhea" id="RHEA:74907"/>
        <dbReference type="Rhea" id="RHEA-COMP:9627"/>
        <dbReference type="Rhea" id="RHEA-COMP:9685"/>
        <dbReference type="ChEBI" id="CHEBI:15378"/>
        <dbReference type="ChEBI" id="CHEBI:64479"/>
        <dbReference type="ChEBI" id="CHEBI:78453"/>
        <dbReference type="ChEBI" id="CHEBI:194098"/>
        <dbReference type="ChEBI" id="CHEBI:456215"/>
    </reaction>
    <physiologicalReaction direction="left-to-right" evidence="6">
        <dbReference type="Rhea" id="RHEA:74908"/>
    </physiologicalReaction>
</comment>
<comment type="catalytic activity">
    <reaction evidence="3">
        <text>a (3R)-3-isocyanyl-fatty acid + holo-[ACP] + ATP = a (3R)-3-isocyanyl-fatty acyl-[ACP] + AMP + diphosphate</text>
        <dbReference type="Rhea" id="RHEA:74955"/>
        <dbReference type="Rhea" id="RHEA-COMP:9685"/>
        <dbReference type="Rhea" id="RHEA-COMP:18454"/>
        <dbReference type="ChEBI" id="CHEBI:30616"/>
        <dbReference type="ChEBI" id="CHEBI:33019"/>
        <dbReference type="ChEBI" id="CHEBI:64479"/>
        <dbReference type="ChEBI" id="CHEBI:193084"/>
        <dbReference type="ChEBI" id="CHEBI:194105"/>
        <dbReference type="ChEBI" id="CHEBI:456215"/>
    </reaction>
    <physiologicalReaction direction="left-to-right" evidence="3">
        <dbReference type="Rhea" id="RHEA:74956"/>
    </physiologicalReaction>
</comment>
<comment type="catalytic activity">
    <reaction evidence="7">
        <text>a (3R)-3-isocyanyl-fatty acid + ATP + H(+) = a (3R)-3-isocyanyl-fatty acyl-AMP + diphosphate</text>
        <dbReference type="Rhea" id="RHEA:74967"/>
        <dbReference type="ChEBI" id="CHEBI:15378"/>
        <dbReference type="ChEBI" id="CHEBI:30616"/>
        <dbReference type="ChEBI" id="CHEBI:33019"/>
        <dbReference type="ChEBI" id="CHEBI:193084"/>
        <dbReference type="ChEBI" id="CHEBI:194104"/>
    </reaction>
    <physiologicalReaction direction="left-to-right" evidence="7">
        <dbReference type="Rhea" id="RHEA:74968"/>
    </physiologicalReaction>
</comment>
<comment type="catalytic activity">
    <reaction evidence="7">
        <text>a (3R)-3-isocyanyl-fatty acyl-AMP + holo-[ACP] = a (3R)-3-isocyanyl-fatty acyl-[ACP] + AMP + H(+)</text>
        <dbReference type="Rhea" id="RHEA:74975"/>
        <dbReference type="Rhea" id="RHEA-COMP:9685"/>
        <dbReference type="Rhea" id="RHEA-COMP:18454"/>
        <dbReference type="ChEBI" id="CHEBI:15378"/>
        <dbReference type="ChEBI" id="CHEBI:64479"/>
        <dbReference type="ChEBI" id="CHEBI:194104"/>
        <dbReference type="ChEBI" id="CHEBI:194105"/>
        <dbReference type="ChEBI" id="CHEBI:456215"/>
    </reaction>
    <physiologicalReaction direction="left-to-right" evidence="7">
        <dbReference type="Rhea" id="RHEA:74976"/>
    </physiologicalReaction>
</comment>
<comment type="catalytic activity">
    <reaction evidence="3">
        <text>(3R)-3-isocyanylbutanoate + holo-[ACP] + ATP = (3R)-3-isocyanylbutanoyl-[ACP] + AMP + diphosphate</text>
        <dbReference type="Rhea" id="RHEA:74959"/>
        <dbReference type="Rhea" id="RHEA-COMP:9685"/>
        <dbReference type="Rhea" id="RHEA-COMP:18456"/>
        <dbReference type="ChEBI" id="CHEBI:30616"/>
        <dbReference type="ChEBI" id="CHEBI:33019"/>
        <dbReference type="ChEBI" id="CHEBI:64479"/>
        <dbReference type="ChEBI" id="CHEBI:193085"/>
        <dbReference type="ChEBI" id="CHEBI:194102"/>
        <dbReference type="ChEBI" id="CHEBI:456215"/>
    </reaction>
    <physiologicalReaction direction="left-to-right" evidence="3">
        <dbReference type="Rhea" id="RHEA:74960"/>
    </physiologicalReaction>
</comment>
<comment type="catalytic activity">
    <reaction evidence="7">
        <text>(3R)-3-isocyanylbutanoate + ATP + H(+) = (3R)-3-isocyanylbutanoyl-AMP + diphosphate</text>
        <dbReference type="Rhea" id="RHEA:74979"/>
        <dbReference type="ChEBI" id="CHEBI:15378"/>
        <dbReference type="ChEBI" id="CHEBI:30616"/>
        <dbReference type="ChEBI" id="CHEBI:33019"/>
        <dbReference type="ChEBI" id="CHEBI:193085"/>
        <dbReference type="ChEBI" id="CHEBI:194101"/>
    </reaction>
    <physiologicalReaction direction="left-to-right" evidence="7">
        <dbReference type="Rhea" id="RHEA:74980"/>
    </physiologicalReaction>
</comment>
<comment type="catalytic activity">
    <reaction evidence="7">
        <text>(3R)-3-isocyanylbutanoyl-AMP + holo-[ACP] = (3R)-3-isocyanylbutanoyl-[ACP] + AMP + H(+)</text>
        <dbReference type="Rhea" id="RHEA:74983"/>
        <dbReference type="Rhea" id="RHEA-COMP:9685"/>
        <dbReference type="Rhea" id="RHEA-COMP:18456"/>
        <dbReference type="ChEBI" id="CHEBI:15378"/>
        <dbReference type="ChEBI" id="CHEBI:64479"/>
        <dbReference type="ChEBI" id="CHEBI:194101"/>
        <dbReference type="ChEBI" id="CHEBI:194102"/>
        <dbReference type="ChEBI" id="CHEBI:456215"/>
    </reaction>
    <physiologicalReaction direction="left-to-right" evidence="7">
        <dbReference type="Rhea" id="RHEA:74984"/>
    </physiologicalReaction>
</comment>
<comment type="cofactor">
    <cofactor evidence="1">
        <name>Mg(2+)</name>
        <dbReference type="ChEBI" id="CHEBI:18420"/>
    </cofactor>
</comment>
<comment type="similarity">
    <text evidence="5">Belongs to the ATP-dependent AMP-binding enzyme family.</text>
</comment>
<name>INLPC_STRC4</name>
<organism>
    <name type="scientific">Streptomyces coeruleorubidus</name>
    <dbReference type="NCBI Taxonomy" id="116188"/>
    <lineage>
        <taxon>Bacteria</taxon>
        <taxon>Bacillati</taxon>
        <taxon>Actinomycetota</taxon>
        <taxon>Actinomycetes</taxon>
        <taxon>Kitasatosporales</taxon>
        <taxon>Streptomycetaceae</taxon>
        <taxon>Streptomyces</taxon>
    </lineage>
</organism>
<accession>P0DX14</accession>
<proteinExistence type="evidence at protein level"/>
<sequence length="519" mass="56364">MDRLHHPQLQTLVQTTSFHAQHEPTTPAVLCEGRTLTYEQLHRESNRIAHALKAAGLAPGDRVAYLGKESEHYYEILFGCAKSGTVLVPVNWRLTAPEVSHILQDSGTRLLFLEDEFGPVVEKMPAAPPETIVALGESFAAWKASHLDTDPKPHDVTPDTPVAQLYTSGTTGLPKGVVLAHRSFFAIRDALASEGLDWIDWRVGDIALIGIPGFHIGGLWWATQNFNAGTTVVAMRAFAARQAVDLIRDLGITTACVVPAMLRMMLTEPGVGAKDFTTLRKTVYGGSPISEALLEESLAVLDCEFAQIYGLTETGNTAVCLPPAAHVPGGSLMQAAGHPYPGVRSKVIDGEGRELPPGAVGEVCLATPARMVEYWGLPDKTAETLVDGWIHTGDAGYVDEDGYVFIRDRIKDAILVAGENVYPAEIENVLEGHPGVAEAVVVGAPDERWGEYVHAFVVAAPGQQPSPRDLHTFLVPQLASFKLPARYEFIDSVPRNPSGKILRRELRDRFWGDSARKVN</sequence>
<protein>
    <recommendedName>
        <fullName evidence="6">Fatty acid--[acyl-carrier-protein] ligase ScoC</fullName>
        <ecNumber evidence="2 3">6.2.1.-</ecNumber>
        <ecNumber evidence="2">6.2.1.47</ecNumber>
    </recommendedName>
</protein>
<dbReference type="EC" id="6.2.1.-" evidence="2 3"/>
<dbReference type="EC" id="6.2.1.47" evidence="2"/>
<dbReference type="EMBL" id="OL448873">
    <property type="protein sequence ID" value="UYZ56982.1"/>
    <property type="molecule type" value="Genomic_DNA"/>
</dbReference>
<dbReference type="SMR" id="P0DX14"/>
<dbReference type="GO" id="GO:0016878">
    <property type="term" value="F:acid-thiol ligase activity"/>
    <property type="evidence" value="ECO:0007669"/>
    <property type="project" value="UniProtKB-ARBA"/>
</dbReference>
<dbReference type="GO" id="GO:0005524">
    <property type="term" value="F:ATP binding"/>
    <property type="evidence" value="ECO:0007669"/>
    <property type="project" value="UniProtKB-KW"/>
</dbReference>
<dbReference type="GO" id="GO:0046872">
    <property type="term" value="F:metal ion binding"/>
    <property type="evidence" value="ECO:0007669"/>
    <property type="project" value="UniProtKB-KW"/>
</dbReference>
<dbReference type="GO" id="GO:0006631">
    <property type="term" value="P:fatty acid metabolic process"/>
    <property type="evidence" value="ECO:0007669"/>
    <property type="project" value="UniProtKB-KW"/>
</dbReference>
<dbReference type="FunFam" id="3.30.300.30:FF:000008">
    <property type="entry name" value="2,3-dihydroxybenzoate-AMP ligase"/>
    <property type="match status" value="1"/>
</dbReference>
<dbReference type="Gene3D" id="3.30.300.30">
    <property type="match status" value="1"/>
</dbReference>
<dbReference type="Gene3D" id="3.40.50.12780">
    <property type="entry name" value="N-terminal domain of ligase-like"/>
    <property type="match status" value="1"/>
</dbReference>
<dbReference type="InterPro" id="IPR025110">
    <property type="entry name" value="AMP-bd_C"/>
</dbReference>
<dbReference type="InterPro" id="IPR045851">
    <property type="entry name" value="AMP-bd_C_sf"/>
</dbReference>
<dbReference type="InterPro" id="IPR000873">
    <property type="entry name" value="AMP-dep_synth/lig_dom"/>
</dbReference>
<dbReference type="InterPro" id="IPR042099">
    <property type="entry name" value="ANL_N_sf"/>
</dbReference>
<dbReference type="InterPro" id="IPR050237">
    <property type="entry name" value="ATP-dep_AMP-bd_enzyme"/>
</dbReference>
<dbReference type="NCBIfam" id="NF004837">
    <property type="entry name" value="PRK06187.1"/>
    <property type="match status" value="1"/>
</dbReference>
<dbReference type="PANTHER" id="PTHR43767">
    <property type="entry name" value="LONG-CHAIN-FATTY-ACID--COA LIGASE"/>
    <property type="match status" value="1"/>
</dbReference>
<dbReference type="PANTHER" id="PTHR43767:SF1">
    <property type="entry name" value="NONRIBOSOMAL PEPTIDE SYNTHASE PES1 (EUROFUNG)-RELATED"/>
    <property type="match status" value="1"/>
</dbReference>
<dbReference type="Pfam" id="PF00501">
    <property type="entry name" value="AMP-binding"/>
    <property type="match status" value="1"/>
</dbReference>
<dbReference type="Pfam" id="PF13193">
    <property type="entry name" value="AMP-binding_C"/>
    <property type="match status" value="1"/>
</dbReference>
<dbReference type="SUPFAM" id="SSF56801">
    <property type="entry name" value="Acetyl-CoA synthetase-like"/>
    <property type="match status" value="1"/>
</dbReference>
<feature type="chain" id="PRO_0000458127" description="Fatty acid--[acyl-carrier-protein] ligase ScoC">
    <location>
        <begin position="1"/>
        <end position="519"/>
    </location>
</feature>
<feature type="binding site" evidence="1">
    <location>
        <position position="167"/>
    </location>
    <ligand>
        <name>Mg(2+)</name>
        <dbReference type="ChEBI" id="CHEBI:18420"/>
    </ligand>
</feature>
<feature type="binding site" evidence="1">
    <location>
        <position position="216"/>
    </location>
    <ligand>
        <name>ATP</name>
        <dbReference type="ChEBI" id="CHEBI:30616"/>
    </ligand>
</feature>
<feature type="binding site" evidence="1">
    <location>
        <position position="312"/>
    </location>
    <ligand>
        <name>ATP</name>
        <dbReference type="ChEBI" id="CHEBI:30616"/>
    </ligand>
</feature>
<feature type="binding site" evidence="1">
    <location>
        <position position="313"/>
    </location>
    <ligand>
        <name>Mg(2+)</name>
        <dbReference type="ChEBI" id="CHEBI:18420"/>
    </ligand>
</feature>
<feature type="binding site" evidence="1">
    <location>
        <position position="394"/>
    </location>
    <ligand>
        <name>ATP</name>
        <dbReference type="ChEBI" id="CHEBI:30616"/>
    </ligand>
</feature>
<feature type="binding site" evidence="1">
    <location>
        <position position="411"/>
    </location>
    <ligand>
        <name>ATP</name>
        <dbReference type="ChEBI" id="CHEBI:30616"/>
    </ligand>
</feature>